<gene>
    <name evidence="1" type="primary">psaA</name>
</gene>
<reference key="1">
    <citation type="journal article" date="2002" name="Proc. Natl. Acad. Sci. U.S.A.">
        <title>The chloroplast and mitochondrial genome sequences of the charophyte Chaetosphaeridium globosum: insights into the timing of the events that restructured organelle DNAs within the green algal lineage that led to land plants.</title>
        <authorList>
            <person name="Turmel M."/>
            <person name="Otis C."/>
            <person name="Lemieux C."/>
        </authorList>
    </citation>
    <scope>NUCLEOTIDE SEQUENCE [LARGE SCALE GENOMIC DNA]</scope>
    <source>
        <strain>M1311</strain>
    </source>
</reference>
<name>PSAA_CHAGL</name>
<organism>
    <name type="scientific">Chaetosphaeridium globosum</name>
    <name type="common">Charophycean green alga</name>
    <name type="synonym">Herposteiron globosum</name>
    <dbReference type="NCBI Taxonomy" id="96477"/>
    <lineage>
        <taxon>Eukaryota</taxon>
        <taxon>Viridiplantae</taxon>
        <taxon>Streptophyta</taxon>
        <taxon>Coleochaetophyceae</taxon>
        <taxon>Coleochaetales</taxon>
        <taxon>Chaetosphaeridiaceae</taxon>
        <taxon>Chaetosphaeridium</taxon>
    </lineage>
</organism>
<comment type="function">
    <text>PsaA and PsaB bind P700, the primary electron donor of photosystem I (PSI), as well as the electron acceptors A0, A1 and FX. PSI is a plastocyanin-ferredoxin oxidoreductase, converting photonic excitation into a charge separation, which transfers an electron from the donor P700 chlorophyll pair to the spectroscopically characterized acceptors A0, A1, FX, FA and FB in turn. Oxidized P700 is reduced on the lumenal side of the thylakoid membrane by plastocyanin.</text>
</comment>
<comment type="catalytic activity">
    <reaction evidence="1">
        <text>reduced [plastocyanin] + hnu + oxidized [2Fe-2S]-[ferredoxin] = oxidized [plastocyanin] + reduced [2Fe-2S]-[ferredoxin]</text>
        <dbReference type="Rhea" id="RHEA:30407"/>
        <dbReference type="Rhea" id="RHEA-COMP:10000"/>
        <dbReference type="Rhea" id="RHEA-COMP:10001"/>
        <dbReference type="Rhea" id="RHEA-COMP:10039"/>
        <dbReference type="Rhea" id="RHEA-COMP:10040"/>
        <dbReference type="ChEBI" id="CHEBI:29036"/>
        <dbReference type="ChEBI" id="CHEBI:30212"/>
        <dbReference type="ChEBI" id="CHEBI:33737"/>
        <dbReference type="ChEBI" id="CHEBI:33738"/>
        <dbReference type="ChEBI" id="CHEBI:49552"/>
        <dbReference type="EC" id="1.97.1.12"/>
    </reaction>
</comment>
<comment type="cofactor">
    <text evidence="1">P700 is a chlorophyll a/chlorophyll a' dimer, A0 is one or more chlorophyll a, A1 is one or both phylloquinones and FX is a shared 4Fe-4S iron-sulfur center.</text>
</comment>
<comment type="subunit">
    <text evidence="1">The PsaA/B heterodimer binds the P700 chlorophyll special pair and subsequent electron acceptors. PSI consists of a core antenna complex that captures photons, and an electron transfer chain that converts photonic excitation into a charge separation. The eukaryotic PSI reaction center is composed of at least 11 subunits.</text>
</comment>
<comment type="subcellular location">
    <subcellularLocation>
        <location evidence="1">Plastid</location>
        <location evidence="1">Chloroplast thylakoid membrane</location>
        <topology evidence="1">Multi-pass membrane protein</topology>
    </subcellularLocation>
</comment>
<comment type="similarity">
    <text evidence="1">Belongs to the PsaA/PsaB family.</text>
</comment>
<protein>
    <recommendedName>
        <fullName evidence="1">Photosystem I P700 chlorophyll a apoprotein A1</fullName>
        <ecNumber evidence="1">1.97.1.12</ecNumber>
    </recommendedName>
    <alternativeName>
        <fullName evidence="1">PSI-A</fullName>
    </alternativeName>
    <alternativeName>
        <fullName evidence="1">PsaA</fullName>
    </alternativeName>
</protein>
<evidence type="ECO:0000255" key="1">
    <source>
        <dbReference type="HAMAP-Rule" id="MF_00458"/>
    </source>
</evidence>
<keyword id="KW-0004">4Fe-4S</keyword>
<keyword id="KW-0148">Chlorophyll</keyword>
<keyword id="KW-0150">Chloroplast</keyword>
<keyword id="KW-0157">Chromophore</keyword>
<keyword id="KW-0249">Electron transport</keyword>
<keyword id="KW-0408">Iron</keyword>
<keyword id="KW-0411">Iron-sulfur</keyword>
<keyword id="KW-0460">Magnesium</keyword>
<keyword id="KW-0472">Membrane</keyword>
<keyword id="KW-0479">Metal-binding</keyword>
<keyword id="KW-0560">Oxidoreductase</keyword>
<keyword id="KW-0602">Photosynthesis</keyword>
<keyword id="KW-0603">Photosystem I</keyword>
<keyword id="KW-0934">Plastid</keyword>
<keyword id="KW-0793">Thylakoid</keyword>
<keyword id="KW-0812">Transmembrane</keyword>
<keyword id="KW-1133">Transmembrane helix</keyword>
<keyword id="KW-0813">Transport</keyword>
<sequence>MTIRSPETEVKIVVEKDPVKTSFEKWAQPGHFSRTLAKGPSTTTWIWNLHADAHDFDSHTSDLEEISRKVFSAHFGQIAVILIWLSGMYFHGARFSNYEAWLSDPTHIKPSAQVVWPIVGQEILNGDVGGGFQGVQITSGFFQIWRASGITSELQLYSTAIGGLVLATLTLIGGWYHYHKAAPTLAWFQDVESMLNHHLAGLIGLGSLSWAGHQIHVSLPINQLLDAGVDPKEIPLPHEFILNRELLAQLYPSFSKGLTPFFTLNWSEYSDFLTFRGGLNPVTGGLWLSDTAHHHLAIAVLFIIAGHQYRTNWGIGHSLREILEAHKGPFTGEGHKGLYEILTTSWHAQLALNLALFGSLTIIVAHHMYAMPPYPYLATDYGTQLSLFTHHMWIGGFLVTGAAAHAAIFLVRDYDPTTQYNNLLDRVLRHRDAIISHLNWVCIFLGFHSFGLYIHNDTMSALGRPQDMFSDTAIQLQPVFAQWIQNTHTLAPTLTAPNAASSTSITWGGNLVAVGGKVALLPIPLGTADFLVHHIHAFTIHVTVLILLKGVLFARSSRLIPDKANLGFRFPCDGPGRGGTCQVSAWDHVFLGLFWMYNSISVVIFHFSWKMQSDVWGTVTSNGVSNITGGNFAQSANTINGWLRDFLWAQASQVIQSYGSALSAYGLIFLGAHFVWAFSLMFLFSGRGYWQELIESIVWAHNKLKVAPAIQPRALSIIQGRAVGVAHYLLGGIATTWAFFLARIISVG</sequence>
<feature type="chain" id="PRO_0000088538" description="Photosystem I P700 chlorophyll a apoprotein A1">
    <location>
        <begin position="1"/>
        <end position="748"/>
    </location>
</feature>
<feature type="transmembrane region" description="Helical; Name=I" evidence="1">
    <location>
        <begin position="70"/>
        <end position="93"/>
    </location>
</feature>
<feature type="transmembrane region" description="Helical; Name=II" evidence="1">
    <location>
        <begin position="156"/>
        <end position="179"/>
    </location>
</feature>
<feature type="transmembrane region" description="Helical; Name=III" evidence="1">
    <location>
        <begin position="195"/>
        <end position="219"/>
    </location>
</feature>
<feature type="transmembrane region" description="Helical; Name=IV" evidence="1">
    <location>
        <begin position="291"/>
        <end position="309"/>
    </location>
</feature>
<feature type="transmembrane region" description="Helical; Name=V" evidence="1">
    <location>
        <begin position="346"/>
        <end position="369"/>
    </location>
</feature>
<feature type="transmembrane region" description="Helical; Name=VI" evidence="1">
    <location>
        <begin position="385"/>
        <end position="411"/>
    </location>
</feature>
<feature type="transmembrane region" description="Helical; Name=VII" evidence="1">
    <location>
        <begin position="433"/>
        <end position="455"/>
    </location>
</feature>
<feature type="transmembrane region" description="Helical; Name=VIII" evidence="1">
    <location>
        <begin position="530"/>
        <end position="548"/>
    </location>
</feature>
<feature type="transmembrane region" description="Helical; Name=IX" evidence="1">
    <location>
        <begin position="588"/>
        <end position="609"/>
    </location>
</feature>
<feature type="transmembrane region" description="Helical; Name=X" evidence="1">
    <location>
        <begin position="662"/>
        <end position="684"/>
    </location>
</feature>
<feature type="transmembrane region" description="Helical; Name=XI" evidence="1">
    <location>
        <begin position="722"/>
        <end position="742"/>
    </location>
</feature>
<feature type="binding site" evidence="1">
    <location>
        <position position="572"/>
    </location>
    <ligand>
        <name>[4Fe-4S] cluster</name>
        <dbReference type="ChEBI" id="CHEBI:49883"/>
        <note>ligand shared between dimeric partners</note>
    </ligand>
</feature>
<feature type="binding site" evidence="1">
    <location>
        <position position="581"/>
    </location>
    <ligand>
        <name>[4Fe-4S] cluster</name>
        <dbReference type="ChEBI" id="CHEBI:49883"/>
        <note>ligand shared between dimeric partners</note>
    </ligand>
</feature>
<feature type="binding site" description="axial binding residue" evidence="1">
    <location>
        <position position="673"/>
    </location>
    <ligand>
        <name>chlorophyll a'</name>
        <dbReference type="ChEBI" id="CHEBI:189419"/>
        <label>A1</label>
    </ligand>
    <ligandPart>
        <name>Mg</name>
        <dbReference type="ChEBI" id="CHEBI:25107"/>
    </ligandPart>
</feature>
<feature type="binding site" description="axial binding residue" evidence="1">
    <location>
        <position position="681"/>
    </location>
    <ligand>
        <name>chlorophyll a</name>
        <dbReference type="ChEBI" id="CHEBI:58416"/>
        <label>A3</label>
    </ligand>
    <ligandPart>
        <name>Mg</name>
        <dbReference type="ChEBI" id="CHEBI:25107"/>
    </ligandPart>
</feature>
<feature type="binding site" evidence="1">
    <location>
        <position position="689"/>
    </location>
    <ligand>
        <name>chlorophyll a</name>
        <dbReference type="ChEBI" id="CHEBI:58416"/>
        <label>A3</label>
    </ligand>
</feature>
<feature type="binding site" evidence="1">
    <location>
        <position position="690"/>
    </location>
    <ligand>
        <name>phylloquinone</name>
        <dbReference type="ChEBI" id="CHEBI:18067"/>
        <label>A</label>
    </ligand>
</feature>
<accession>Q8M9W0</accession>
<geneLocation type="chloroplast"/>
<proteinExistence type="inferred from homology"/>
<dbReference type="EC" id="1.97.1.12" evidence="1"/>
<dbReference type="EMBL" id="AF494278">
    <property type="protein sequence ID" value="AAM96532.1"/>
    <property type="molecule type" value="Genomic_DNA"/>
</dbReference>
<dbReference type="RefSeq" id="NP_683829.1">
    <property type="nucleotide sequence ID" value="NC_004115.1"/>
</dbReference>
<dbReference type="SMR" id="Q8M9W0"/>
<dbReference type="GeneID" id="860688"/>
<dbReference type="GO" id="GO:0009535">
    <property type="term" value="C:chloroplast thylakoid membrane"/>
    <property type="evidence" value="ECO:0007669"/>
    <property type="project" value="UniProtKB-SubCell"/>
</dbReference>
<dbReference type="GO" id="GO:0009522">
    <property type="term" value="C:photosystem I"/>
    <property type="evidence" value="ECO:0007669"/>
    <property type="project" value="UniProtKB-KW"/>
</dbReference>
<dbReference type="GO" id="GO:0051539">
    <property type="term" value="F:4 iron, 4 sulfur cluster binding"/>
    <property type="evidence" value="ECO:0007669"/>
    <property type="project" value="UniProtKB-KW"/>
</dbReference>
<dbReference type="GO" id="GO:0016168">
    <property type="term" value="F:chlorophyll binding"/>
    <property type="evidence" value="ECO:0007669"/>
    <property type="project" value="UniProtKB-KW"/>
</dbReference>
<dbReference type="GO" id="GO:0009055">
    <property type="term" value="F:electron transfer activity"/>
    <property type="evidence" value="ECO:0007669"/>
    <property type="project" value="UniProtKB-UniRule"/>
</dbReference>
<dbReference type="GO" id="GO:0000287">
    <property type="term" value="F:magnesium ion binding"/>
    <property type="evidence" value="ECO:0007669"/>
    <property type="project" value="UniProtKB-UniRule"/>
</dbReference>
<dbReference type="GO" id="GO:0016491">
    <property type="term" value="F:oxidoreductase activity"/>
    <property type="evidence" value="ECO:0007669"/>
    <property type="project" value="UniProtKB-KW"/>
</dbReference>
<dbReference type="GO" id="GO:0015979">
    <property type="term" value="P:photosynthesis"/>
    <property type="evidence" value="ECO:0007669"/>
    <property type="project" value="UniProtKB-UniRule"/>
</dbReference>
<dbReference type="FunFam" id="1.20.1130.10:FF:000001">
    <property type="entry name" value="Photosystem I P700 chlorophyll a apoprotein A2"/>
    <property type="match status" value="1"/>
</dbReference>
<dbReference type="Gene3D" id="1.20.1130.10">
    <property type="entry name" value="Photosystem I PsaA/PsaB"/>
    <property type="match status" value="1"/>
</dbReference>
<dbReference type="HAMAP" id="MF_00458">
    <property type="entry name" value="PSI_PsaA"/>
    <property type="match status" value="1"/>
</dbReference>
<dbReference type="InterPro" id="IPR006243">
    <property type="entry name" value="PSI_PsaA"/>
</dbReference>
<dbReference type="InterPro" id="IPR001280">
    <property type="entry name" value="PSI_PsaA/B"/>
</dbReference>
<dbReference type="InterPro" id="IPR020586">
    <property type="entry name" value="PSI_PsaA/B_CS"/>
</dbReference>
<dbReference type="InterPro" id="IPR036408">
    <property type="entry name" value="PSI_PsaA/B_sf"/>
</dbReference>
<dbReference type="NCBIfam" id="TIGR01335">
    <property type="entry name" value="psaA"/>
    <property type="match status" value="1"/>
</dbReference>
<dbReference type="PANTHER" id="PTHR30128">
    <property type="entry name" value="OUTER MEMBRANE PROTEIN, OMPA-RELATED"/>
    <property type="match status" value="1"/>
</dbReference>
<dbReference type="PANTHER" id="PTHR30128:SF19">
    <property type="entry name" value="PHOTOSYSTEM I P700 CHLOROPHYLL A APOPROTEIN A1-RELATED"/>
    <property type="match status" value="1"/>
</dbReference>
<dbReference type="Pfam" id="PF00223">
    <property type="entry name" value="PsaA_PsaB"/>
    <property type="match status" value="1"/>
</dbReference>
<dbReference type="PIRSF" id="PIRSF002905">
    <property type="entry name" value="PSI_A"/>
    <property type="match status" value="1"/>
</dbReference>
<dbReference type="PRINTS" id="PR00257">
    <property type="entry name" value="PHOTSYSPSAAB"/>
</dbReference>
<dbReference type="SUPFAM" id="SSF81558">
    <property type="entry name" value="Photosystem I subunits PsaA/PsaB"/>
    <property type="match status" value="1"/>
</dbReference>
<dbReference type="PROSITE" id="PS00419">
    <property type="entry name" value="PHOTOSYSTEM_I_PSAAB"/>
    <property type="match status" value="1"/>
</dbReference>